<dbReference type="EC" id="2.6.1.9" evidence="1"/>
<dbReference type="EMBL" id="CP001071">
    <property type="protein sequence ID" value="ACD05947.1"/>
    <property type="molecule type" value="Genomic_DNA"/>
</dbReference>
<dbReference type="RefSeq" id="WP_012421161.1">
    <property type="nucleotide sequence ID" value="NC_010655.1"/>
</dbReference>
<dbReference type="SMR" id="B2UPR9"/>
<dbReference type="STRING" id="349741.Amuc_2138"/>
<dbReference type="PaxDb" id="349741-Amuc_2138"/>
<dbReference type="KEGG" id="amu:Amuc_2138"/>
<dbReference type="eggNOG" id="COG0079">
    <property type="taxonomic scope" value="Bacteria"/>
</dbReference>
<dbReference type="HOGENOM" id="CLU_017584_3_3_0"/>
<dbReference type="OrthoDB" id="9813612at2"/>
<dbReference type="BioCyc" id="AMUC349741:G1GBX-2281-MONOMER"/>
<dbReference type="UniPathway" id="UPA00031">
    <property type="reaction ID" value="UER00012"/>
</dbReference>
<dbReference type="Proteomes" id="UP000001031">
    <property type="component" value="Chromosome"/>
</dbReference>
<dbReference type="GO" id="GO:0004400">
    <property type="term" value="F:histidinol-phosphate transaminase activity"/>
    <property type="evidence" value="ECO:0007669"/>
    <property type="project" value="UniProtKB-UniRule"/>
</dbReference>
<dbReference type="GO" id="GO:0030170">
    <property type="term" value="F:pyridoxal phosphate binding"/>
    <property type="evidence" value="ECO:0007669"/>
    <property type="project" value="InterPro"/>
</dbReference>
<dbReference type="GO" id="GO:0000105">
    <property type="term" value="P:L-histidine biosynthetic process"/>
    <property type="evidence" value="ECO:0007669"/>
    <property type="project" value="UniProtKB-UniRule"/>
</dbReference>
<dbReference type="CDD" id="cd00609">
    <property type="entry name" value="AAT_like"/>
    <property type="match status" value="1"/>
</dbReference>
<dbReference type="Gene3D" id="3.90.1150.10">
    <property type="entry name" value="Aspartate Aminotransferase, domain 1"/>
    <property type="match status" value="1"/>
</dbReference>
<dbReference type="Gene3D" id="3.40.640.10">
    <property type="entry name" value="Type I PLP-dependent aspartate aminotransferase-like (Major domain)"/>
    <property type="match status" value="1"/>
</dbReference>
<dbReference type="HAMAP" id="MF_01023">
    <property type="entry name" value="HisC_aminotrans_2"/>
    <property type="match status" value="1"/>
</dbReference>
<dbReference type="InterPro" id="IPR001917">
    <property type="entry name" value="Aminotrans_II_pyridoxalP_BS"/>
</dbReference>
<dbReference type="InterPro" id="IPR004839">
    <property type="entry name" value="Aminotransferase_I/II_large"/>
</dbReference>
<dbReference type="InterPro" id="IPR005861">
    <property type="entry name" value="HisP_aminotrans"/>
</dbReference>
<dbReference type="InterPro" id="IPR050106">
    <property type="entry name" value="HistidinolP_aminotransfase"/>
</dbReference>
<dbReference type="InterPro" id="IPR015424">
    <property type="entry name" value="PyrdxlP-dep_Trfase"/>
</dbReference>
<dbReference type="InterPro" id="IPR015421">
    <property type="entry name" value="PyrdxlP-dep_Trfase_major"/>
</dbReference>
<dbReference type="InterPro" id="IPR015422">
    <property type="entry name" value="PyrdxlP-dep_Trfase_small"/>
</dbReference>
<dbReference type="NCBIfam" id="TIGR01141">
    <property type="entry name" value="hisC"/>
    <property type="match status" value="1"/>
</dbReference>
<dbReference type="PANTHER" id="PTHR43643:SF3">
    <property type="entry name" value="HISTIDINOL-PHOSPHATE AMINOTRANSFERASE"/>
    <property type="match status" value="1"/>
</dbReference>
<dbReference type="PANTHER" id="PTHR43643">
    <property type="entry name" value="HISTIDINOL-PHOSPHATE AMINOTRANSFERASE 2"/>
    <property type="match status" value="1"/>
</dbReference>
<dbReference type="Pfam" id="PF00155">
    <property type="entry name" value="Aminotran_1_2"/>
    <property type="match status" value="1"/>
</dbReference>
<dbReference type="SUPFAM" id="SSF53383">
    <property type="entry name" value="PLP-dependent transferases"/>
    <property type="match status" value="1"/>
</dbReference>
<dbReference type="PROSITE" id="PS00599">
    <property type="entry name" value="AA_TRANSFER_CLASS_2"/>
    <property type="match status" value="1"/>
</dbReference>
<keyword id="KW-0028">Amino-acid biosynthesis</keyword>
<keyword id="KW-0032">Aminotransferase</keyword>
<keyword id="KW-0368">Histidine biosynthesis</keyword>
<keyword id="KW-0663">Pyridoxal phosphate</keyword>
<keyword id="KW-1185">Reference proteome</keyword>
<keyword id="KW-0808">Transferase</keyword>
<sequence>MSIESFANQHVLELVAYQPGKPIEETARELGLNPHDIVKLASNENPLGPSPKAVEAIARAAAGVNIYPDGAAFRLRSAIAEFCGVEFGQTVVGTGSSEVIELICHALLNPRAEVVAAKHAFSMYPIMSKLFGAAYVEVPNKEDWTHDLDGFLAAITENTRVVFITNPTNPVGTVVGQQEIDDFMAKVPEHVLVVFDEAYREFSDNPPDTLKFVREGRNVVVLRTFSKAYGLAGLRVGYGIAPEPVCSMLHKARAPFNLHVLAQEAALAALEDREHVRRTVENNKEGMRFYEQAFREMGLEWIPSQGNFILVKVGRGKQVFQDMLARGVIVRAQDGYGLPEWIRISIGTPAENARCIEVLKEVL</sequence>
<reference key="1">
    <citation type="journal article" date="2011" name="PLoS ONE">
        <title>The genome of Akkermansia muciniphila, a dedicated intestinal mucin degrader, and its use in exploring intestinal metagenomes.</title>
        <authorList>
            <person name="van Passel M.W."/>
            <person name="Kant R."/>
            <person name="Zoetendal E.G."/>
            <person name="Plugge C.M."/>
            <person name="Derrien M."/>
            <person name="Malfatti S.A."/>
            <person name="Chain P.S."/>
            <person name="Woyke T."/>
            <person name="Palva A."/>
            <person name="de Vos W.M."/>
            <person name="Smidt H."/>
        </authorList>
    </citation>
    <scope>NUCLEOTIDE SEQUENCE [LARGE SCALE GENOMIC DNA]</scope>
    <source>
        <strain>ATCC BAA-835 / DSM 22959 / JCM 33894 / BCRC 81048 / CCUG 64013 / CIP 107961 / Muc</strain>
    </source>
</reference>
<gene>
    <name evidence="1" type="primary">hisC</name>
    <name type="ordered locus">Amuc_2138</name>
</gene>
<name>HIS8_AKKM8</name>
<comment type="catalytic activity">
    <reaction evidence="1">
        <text>L-histidinol phosphate + 2-oxoglutarate = 3-(imidazol-4-yl)-2-oxopropyl phosphate + L-glutamate</text>
        <dbReference type="Rhea" id="RHEA:23744"/>
        <dbReference type="ChEBI" id="CHEBI:16810"/>
        <dbReference type="ChEBI" id="CHEBI:29985"/>
        <dbReference type="ChEBI" id="CHEBI:57766"/>
        <dbReference type="ChEBI" id="CHEBI:57980"/>
        <dbReference type="EC" id="2.6.1.9"/>
    </reaction>
</comment>
<comment type="cofactor">
    <cofactor evidence="1">
        <name>pyridoxal 5'-phosphate</name>
        <dbReference type="ChEBI" id="CHEBI:597326"/>
    </cofactor>
</comment>
<comment type="pathway">
    <text evidence="1">Amino-acid biosynthesis; L-histidine biosynthesis; L-histidine from 5-phospho-alpha-D-ribose 1-diphosphate: step 7/9.</text>
</comment>
<comment type="subunit">
    <text evidence="1">Homodimer.</text>
</comment>
<comment type="similarity">
    <text evidence="1">Belongs to the class-II pyridoxal-phosphate-dependent aminotransferase family. Histidinol-phosphate aminotransferase subfamily.</text>
</comment>
<evidence type="ECO:0000255" key="1">
    <source>
        <dbReference type="HAMAP-Rule" id="MF_01023"/>
    </source>
</evidence>
<organism>
    <name type="scientific">Akkermansia muciniphila (strain ATCC BAA-835 / DSM 22959 / JCM 33894 / BCRC 81048 / CCUG 64013 / CIP 107961 / Muc)</name>
    <dbReference type="NCBI Taxonomy" id="349741"/>
    <lineage>
        <taxon>Bacteria</taxon>
        <taxon>Pseudomonadati</taxon>
        <taxon>Verrucomicrobiota</taxon>
        <taxon>Verrucomicrobiia</taxon>
        <taxon>Verrucomicrobiales</taxon>
        <taxon>Akkermansiaceae</taxon>
        <taxon>Akkermansia</taxon>
    </lineage>
</organism>
<protein>
    <recommendedName>
        <fullName evidence="1">Histidinol-phosphate aminotransferase</fullName>
        <ecNumber evidence="1">2.6.1.9</ecNumber>
    </recommendedName>
    <alternativeName>
        <fullName evidence="1">Imidazole acetol-phosphate transaminase</fullName>
    </alternativeName>
</protein>
<feature type="chain" id="PRO_1000135382" description="Histidinol-phosphate aminotransferase">
    <location>
        <begin position="1"/>
        <end position="363"/>
    </location>
</feature>
<feature type="modified residue" description="N6-(pyridoxal phosphate)lysine" evidence="1">
    <location>
        <position position="227"/>
    </location>
</feature>
<proteinExistence type="inferred from homology"/>
<accession>B2UPR9</accession>